<proteinExistence type="inferred from homology"/>
<sequence length="69" mass="8078">MKKFLIFLIKVYRKYISPLKVPCCRFYPTCSQYVLEALQKHGIIKGGFMSIKRILRCNPFCKGGYDPVK</sequence>
<protein>
    <recommendedName>
        <fullName evidence="1">Putative membrane protein insertion efficiency factor</fullName>
    </recommendedName>
</protein>
<evidence type="ECO:0000255" key="1">
    <source>
        <dbReference type="HAMAP-Rule" id="MF_00386"/>
    </source>
</evidence>
<keyword id="KW-1003">Cell membrane</keyword>
<keyword id="KW-0472">Membrane</keyword>
<keyword id="KW-1185">Reference proteome</keyword>
<name>YIDD_CLOK5</name>
<organism>
    <name type="scientific">Clostridium kluyveri (strain ATCC 8527 / DSM 555 / NBRC 12016 / NCIMB 10680 / K1)</name>
    <dbReference type="NCBI Taxonomy" id="431943"/>
    <lineage>
        <taxon>Bacteria</taxon>
        <taxon>Bacillati</taxon>
        <taxon>Bacillota</taxon>
        <taxon>Clostridia</taxon>
        <taxon>Eubacteriales</taxon>
        <taxon>Clostridiaceae</taxon>
        <taxon>Clostridium</taxon>
    </lineage>
</organism>
<comment type="function">
    <text evidence="1">Could be involved in insertion of integral membrane proteins into the membrane.</text>
</comment>
<comment type="subcellular location">
    <subcellularLocation>
        <location evidence="1">Cell membrane</location>
        <topology evidence="1">Peripheral membrane protein</topology>
        <orientation evidence="1">Cytoplasmic side</orientation>
    </subcellularLocation>
</comment>
<comment type="similarity">
    <text evidence="1">Belongs to the UPF0161 family.</text>
</comment>
<reference key="1">
    <citation type="journal article" date="2008" name="Proc. Natl. Acad. Sci. U.S.A.">
        <title>The genome of Clostridium kluyveri, a strict anaerobe with unique metabolic features.</title>
        <authorList>
            <person name="Seedorf H."/>
            <person name="Fricke W.F."/>
            <person name="Veith B."/>
            <person name="Brueggemann H."/>
            <person name="Liesegang H."/>
            <person name="Strittmatter A."/>
            <person name="Miethke M."/>
            <person name="Buckel W."/>
            <person name="Hinderberger J."/>
            <person name="Li F."/>
            <person name="Hagemeier C."/>
            <person name="Thauer R.K."/>
            <person name="Gottschalk G."/>
        </authorList>
    </citation>
    <scope>NUCLEOTIDE SEQUENCE [LARGE SCALE GENOMIC DNA]</scope>
    <source>
        <strain>ATCC 8527 / DSM 555 / NBRC 12016 / NCIMB 10680 / K1</strain>
    </source>
</reference>
<accession>A5N454</accession>
<feature type="chain" id="PRO_1000080185" description="Putative membrane protein insertion efficiency factor">
    <location>
        <begin position="1"/>
        <end position="69"/>
    </location>
</feature>
<dbReference type="EMBL" id="CP000673">
    <property type="protein sequence ID" value="EDK35900.1"/>
    <property type="molecule type" value="Genomic_DNA"/>
</dbReference>
<dbReference type="STRING" id="431943.CKL_3924"/>
<dbReference type="KEGG" id="ckl:CKL_3924"/>
<dbReference type="eggNOG" id="COG0759">
    <property type="taxonomic scope" value="Bacteria"/>
</dbReference>
<dbReference type="HOGENOM" id="CLU_144811_6_0_9"/>
<dbReference type="Proteomes" id="UP000002411">
    <property type="component" value="Chromosome"/>
</dbReference>
<dbReference type="GO" id="GO:0005886">
    <property type="term" value="C:plasma membrane"/>
    <property type="evidence" value="ECO:0007669"/>
    <property type="project" value="UniProtKB-SubCell"/>
</dbReference>
<dbReference type="HAMAP" id="MF_00386">
    <property type="entry name" value="UPF0161_YidD"/>
    <property type="match status" value="1"/>
</dbReference>
<dbReference type="InterPro" id="IPR002696">
    <property type="entry name" value="Membr_insert_effic_factor_YidD"/>
</dbReference>
<dbReference type="NCBIfam" id="TIGR00278">
    <property type="entry name" value="membrane protein insertion efficiency factor YidD"/>
    <property type="match status" value="1"/>
</dbReference>
<dbReference type="PANTHER" id="PTHR33383">
    <property type="entry name" value="MEMBRANE PROTEIN INSERTION EFFICIENCY FACTOR-RELATED"/>
    <property type="match status" value="1"/>
</dbReference>
<dbReference type="PANTHER" id="PTHR33383:SF1">
    <property type="entry name" value="MEMBRANE PROTEIN INSERTION EFFICIENCY FACTOR-RELATED"/>
    <property type="match status" value="1"/>
</dbReference>
<dbReference type="Pfam" id="PF01809">
    <property type="entry name" value="YidD"/>
    <property type="match status" value="1"/>
</dbReference>
<dbReference type="SMART" id="SM01234">
    <property type="entry name" value="Haemolytic"/>
    <property type="match status" value="1"/>
</dbReference>
<gene>
    <name type="ordered locus">CKL_3924</name>
</gene>